<accession>P00230</accession>
<reference key="1">
    <citation type="journal article" date="1980" name="J. Biochem.">
        <title>Amino acid sequences of two ferredoxins from Phytolacca esculenta. Gene duplication and speciation.</title>
        <authorList>
            <person name="Wakabayashi S."/>
            <person name="Hase T."/>
            <person name="Wada K."/>
            <person name="Matsubara H."/>
            <person name="Suzuki K."/>
        </authorList>
    </citation>
    <scope>PROTEIN SEQUENCE</scope>
</reference>
<proteinExistence type="evidence at protein level"/>
<organism>
    <name type="scientific">Phytolacca acinosa</name>
    <name type="common">Indian pokeweed</name>
    <name type="synonym">Phytolacca esculenta</name>
    <dbReference type="NCBI Taxonomy" id="3528"/>
    <lineage>
        <taxon>Eukaryota</taxon>
        <taxon>Viridiplantae</taxon>
        <taxon>Streptophyta</taxon>
        <taxon>Embryophyta</taxon>
        <taxon>Tracheophyta</taxon>
        <taxon>Spermatophyta</taxon>
        <taxon>Magnoliopsida</taxon>
        <taxon>eudicotyledons</taxon>
        <taxon>Gunneridae</taxon>
        <taxon>Pentapetalae</taxon>
        <taxon>Caryophyllales</taxon>
        <taxon>Phytolaccaceae</taxon>
        <taxon>Phytolacca</taxon>
    </lineage>
</organism>
<protein>
    <recommendedName>
        <fullName>Ferredoxin-1</fullName>
    </recommendedName>
    <alternativeName>
        <fullName>Ferredoxin I</fullName>
    </alternativeName>
</protein>
<comment type="function">
    <text>Ferredoxins are iron-sulfur proteins that transfer electrons in a wide variety of metabolic reactions.</text>
</comment>
<comment type="cofactor">
    <cofactor>
        <name>[2Fe-2S] cluster</name>
        <dbReference type="ChEBI" id="CHEBI:190135"/>
    </cofactor>
    <text>Binds 1 [2Fe-2S] cluster.</text>
</comment>
<comment type="subcellular location">
    <subcellularLocation>
        <location>Plastid</location>
        <location>Chloroplast</location>
    </subcellularLocation>
</comment>
<comment type="similarity">
    <text evidence="2">Belongs to the 2Fe2S plant-type ferredoxin family.</text>
</comment>
<feature type="chain" id="PRO_0000189350" description="Ferredoxin-1">
    <location>
        <begin position="1"/>
        <end position="96"/>
    </location>
</feature>
<feature type="domain" description="2Fe-2S ferredoxin-type" evidence="1">
    <location>
        <begin position="3"/>
        <end position="93"/>
    </location>
</feature>
<feature type="binding site" evidence="1">
    <location>
        <position position="39"/>
    </location>
    <ligand>
        <name>[2Fe-2S] cluster</name>
        <dbReference type="ChEBI" id="CHEBI:190135"/>
    </ligand>
</feature>
<feature type="binding site" evidence="1">
    <location>
        <position position="44"/>
    </location>
    <ligand>
        <name>[2Fe-2S] cluster</name>
        <dbReference type="ChEBI" id="CHEBI:190135"/>
    </ligand>
</feature>
<feature type="binding site" evidence="1">
    <location>
        <position position="47"/>
    </location>
    <ligand>
        <name>[2Fe-2S] cluster</name>
        <dbReference type="ChEBI" id="CHEBI:190135"/>
    </ligand>
</feature>
<feature type="binding site" evidence="1">
    <location>
        <position position="77"/>
    </location>
    <ligand>
        <name>[2Fe-2S] cluster</name>
        <dbReference type="ChEBI" id="CHEBI:190135"/>
    </ligand>
</feature>
<feature type="sequence variant">
    <original>A</original>
    <variation>T</variation>
    <location>
        <position position="48"/>
    </location>
</feature>
<feature type="sequence variant">
    <original>A</original>
    <variation>V</variation>
    <location>
        <position position="96"/>
    </location>
</feature>
<name>FER1_PHYAN</name>
<keyword id="KW-0001">2Fe-2S</keyword>
<keyword id="KW-0150">Chloroplast</keyword>
<keyword id="KW-0903">Direct protein sequencing</keyword>
<keyword id="KW-0249">Electron transport</keyword>
<keyword id="KW-0408">Iron</keyword>
<keyword id="KW-0411">Iron-sulfur</keyword>
<keyword id="KW-0479">Metal-binding</keyword>
<keyword id="KW-0934">Plastid</keyword>
<keyword id="KW-0813">Transport</keyword>
<evidence type="ECO:0000255" key="1">
    <source>
        <dbReference type="PROSITE-ProRule" id="PRU00465"/>
    </source>
</evidence>
<evidence type="ECO:0000305" key="2"/>
<sequence>ATYKVTLVTPSGTQTIDCPDDTYVLDAAEEAGLDLPYSCRAGSCSSCAGKVTAGTVDQEDQSFLDDDQIEAGFVLTCVAYPKGDVTIETHKEEDIA</sequence>
<dbReference type="PIR" id="B00238">
    <property type="entry name" value="FEFWF"/>
</dbReference>
<dbReference type="SMR" id="P00230"/>
<dbReference type="GO" id="GO:0009570">
    <property type="term" value="C:chloroplast stroma"/>
    <property type="evidence" value="ECO:0007669"/>
    <property type="project" value="TreeGrafter"/>
</dbReference>
<dbReference type="GO" id="GO:0051537">
    <property type="term" value="F:2 iron, 2 sulfur cluster binding"/>
    <property type="evidence" value="ECO:0007669"/>
    <property type="project" value="UniProtKB-KW"/>
</dbReference>
<dbReference type="GO" id="GO:0009055">
    <property type="term" value="F:electron transfer activity"/>
    <property type="evidence" value="ECO:0007669"/>
    <property type="project" value="InterPro"/>
</dbReference>
<dbReference type="GO" id="GO:0046872">
    <property type="term" value="F:metal ion binding"/>
    <property type="evidence" value="ECO:0007669"/>
    <property type="project" value="UniProtKB-KW"/>
</dbReference>
<dbReference type="GO" id="GO:0022900">
    <property type="term" value="P:electron transport chain"/>
    <property type="evidence" value="ECO:0007669"/>
    <property type="project" value="InterPro"/>
</dbReference>
<dbReference type="CDD" id="cd00207">
    <property type="entry name" value="fer2"/>
    <property type="match status" value="1"/>
</dbReference>
<dbReference type="FunFam" id="3.10.20.30:FF:000014">
    <property type="entry name" value="Ferredoxin"/>
    <property type="match status" value="1"/>
</dbReference>
<dbReference type="Gene3D" id="3.10.20.30">
    <property type="match status" value="1"/>
</dbReference>
<dbReference type="InterPro" id="IPR036010">
    <property type="entry name" value="2Fe-2S_ferredoxin-like_sf"/>
</dbReference>
<dbReference type="InterPro" id="IPR001041">
    <property type="entry name" value="2Fe-2S_ferredoxin-type"/>
</dbReference>
<dbReference type="InterPro" id="IPR006058">
    <property type="entry name" value="2Fe2S_fd_BS"/>
</dbReference>
<dbReference type="InterPro" id="IPR012675">
    <property type="entry name" value="Beta-grasp_dom_sf"/>
</dbReference>
<dbReference type="InterPro" id="IPR010241">
    <property type="entry name" value="Fd_pln"/>
</dbReference>
<dbReference type="NCBIfam" id="TIGR02008">
    <property type="entry name" value="fdx_plant"/>
    <property type="match status" value="1"/>
</dbReference>
<dbReference type="PANTHER" id="PTHR43112">
    <property type="entry name" value="FERREDOXIN"/>
    <property type="match status" value="1"/>
</dbReference>
<dbReference type="PANTHER" id="PTHR43112:SF3">
    <property type="entry name" value="FERREDOXIN-2, CHLOROPLASTIC"/>
    <property type="match status" value="1"/>
</dbReference>
<dbReference type="Pfam" id="PF00111">
    <property type="entry name" value="Fer2"/>
    <property type="match status" value="1"/>
</dbReference>
<dbReference type="SUPFAM" id="SSF54292">
    <property type="entry name" value="2Fe-2S ferredoxin-like"/>
    <property type="match status" value="1"/>
</dbReference>
<dbReference type="PROSITE" id="PS00197">
    <property type="entry name" value="2FE2S_FER_1"/>
    <property type="match status" value="1"/>
</dbReference>
<dbReference type="PROSITE" id="PS51085">
    <property type="entry name" value="2FE2S_FER_2"/>
    <property type="match status" value="1"/>
</dbReference>